<reference key="1">
    <citation type="journal article" date="1995" name="DNA Cell Biol.">
        <title>CYP52 (cytochrome P450alk) multigene family in Candida maltosa: identification and characterization of eight members.</title>
        <authorList>
            <person name="Ohkuma M."/>
            <person name="Muraoka S."/>
            <person name="Tanimoto T."/>
            <person name="Fujii M."/>
            <person name="Ohta A."/>
            <person name="Takagi M."/>
        </authorList>
    </citation>
    <scope>NUCLEOTIDE SEQUENCE [GENOMIC DNA]</scope>
    <source>
        <strain>ATCC 28140 / CBS 5611 / IAM 12247 / JCM 1504 / NBRC 1977</strain>
    </source>
</reference>
<sequence length="510" mass="58113">MIDALYILIVALVIYKTAQFVHRKSLEKKHHCQPVKQIPLVSILSGLGFDMFFKDTAEMTKNGGLHKKLQQMLESLQTTTFRSRMLTGSQIVTMEPENERTMCSSAHMKDWTIGYRPFALKPLLGDGIFSSEGESWKHSRIMLRPIFAKEHIKQITAMEPYMLLLIEIIKSSSANEGPVDLQPLFHAFTIDYASDFLFGESCDVLKENLGGKSTSGMDAQVKRDFASVFNDVQNYLTKRMMLGPLAFLVSSKDFHDGIKKQHEFVSYFVQKAISMSDEELNDESKNYVFLYQLAKQTKDAKVLQDELLSILLAGRNTTASLLSFLFFELSHHENVWTTLKEVVDQSFPDVESITFETIQNCDYLRWCLFESLRVNPSVPFNSRTANKDTILPRGGGEDCSHPILVKKGDQVLFPLYASNRQEKYFGRKPEEFIPERWRDLPKTGGPAFMPFSTGPRMCLGQQFALIEASYVTIRLVQTFSKLKSHSLEYAPKRLVAATIRLIDGCFVSFE</sequence>
<gene>
    <name type="primary">CYP52C2</name>
</gene>
<proteinExistence type="evidence at transcript level"/>
<dbReference type="EC" id="1.14.14.-"/>
<dbReference type="EMBL" id="D12718">
    <property type="protein sequence ID" value="BAA02212.1"/>
    <property type="molecule type" value="Genomic_DNA"/>
</dbReference>
<dbReference type="PIR" id="JS0724">
    <property type="entry name" value="JS0724"/>
</dbReference>
<dbReference type="SMR" id="Q12587"/>
<dbReference type="GO" id="GO:0016020">
    <property type="term" value="C:membrane"/>
    <property type="evidence" value="ECO:0007669"/>
    <property type="project" value="UniProtKB-SubCell"/>
</dbReference>
<dbReference type="GO" id="GO:0020037">
    <property type="term" value="F:heme binding"/>
    <property type="evidence" value="ECO:0007669"/>
    <property type="project" value="InterPro"/>
</dbReference>
<dbReference type="GO" id="GO:0005506">
    <property type="term" value="F:iron ion binding"/>
    <property type="evidence" value="ECO:0007669"/>
    <property type="project" value="InterPro"/>
</dbReference>
<dbReference type="GO" id="GO:0016712">
    <property type="term" value="F:oxidoreductase activity, acting on paired donors, with incorporation or reduction of molecular oxygen, reduced flavin or flavoprotein as one donor, and incorporation of one atom of oxygen"/>
    <property type="evidence" value="ECO:0007669"/>
    <property type="project" value="InterPro"/>
</dbReference>
<dbReference type="CDD" id="cd11063">
    <property type="entry name" value="CYP52"/>
    <property type="match status" value="1"/>
</dbReference>
<dbReference type="Gene3D" id="1.10.630.10">
    <property type="entry name" value="Cytochrome P450"/>
    <property type="match status" value="1"/>
</dbReference>
<dbReference type="InterPro" id="IPR001128">
    <property type="entry name" value="Cyt_P450"/>
</dbReference>
<dbReference type="InterPro" id="IPR017972">
    <property type="entry name" value="Cyt_P450_CS"/>
</dbReference>
<dbReference type="InterPro" id="IPR002974">
    <property type="entry name" value="Cyt_P450_E_CYP52_ascomycetes"/>
</dbReference>
<dbReference type="InterPro" id="IPR047146">
    <property type="entry name" value="Cyt_P450_E_CYP52_fungi"/>
</dbReference>
<dbReference type="InterPro" id="IPR002402">
    <property type="entry name" value="Cyt_P450_E_grp-II"/>
</dbReference>
<dbReference type="InterPro" id="IPR036396">
    <property type="entry name" value="Cyt_P450_sf"/>
</dbReference>
<dbReference type="PANTHER" id="PTHR24287">
    <property type="entry name" value="P450, PUTATIVE (EUROFUNG)-RELATED"/>
    <property type="match status" value="1"/>
</dbReference>
<dbReference type="PANTHER" id="PTHR24287:SF1">
    <property type="entry name" value="P450, PUTATIVE (EUROFUNG)-RELATED"/>
    <property type="match status" value="1"/>
</dbReference>
<dbReference type="Pfam" id="PF00067">
    <property type="entry name" value="p450"/>
    <property type="match status" value="1"/>
</dbReference>
<dbReference type="PRINTS" id="PR00464">
    <property type="entry name" value="EP450II"/>
</dbReference>
<dbReference type="PRINTS" id="PR01239">
    <property type="entry name" value="EP450IICYP52"/>
</dbReference>
<dbReference type="PRINTS" id="PR00385">
    <property type="entry name" value="P450"/>
</dbReference>
<dbReference type="SUPFAM" id="SSF48264">
    <property type="entry name" value="Cytochrome P450"/>
    <property type="match status" value="1"/>
</dbReference>
<dbReference type="PROSITE" id="PS00086">
    <property type="entry name" value="CYTOCHROME_P450"/>
    <property type="match status" value="1"/>
</dbReference>
<comment type="function">
    <text>Together with an NADPH cytochrome P450 the enzyme system catalyzes the terminal hydroxylation as the first step in the assimilation of alkanes and fatty acids.</text>
</comment>
<comment type="cofactor">
    <cofactor evidence="1">
        <name>heme</name>
        <dbReference type="ChEBI" id="CHEBI:30413"/>
    </cofactor>
</comment>
<comment type="subcellular location">
    <subcellularLocation>
        <location evidence="2">Membrane</location>
    </subcellularLocation>
</comment>
<comment type="induction">
    <text>By various alkanes.</text>
</comment>
<comment type="similarity">
    <text evidence="2">Belongs to the cytochrome P450 family.</text>
</comment>
<feature type="chain" id="PRO_0000052034" description="Cytochrome P450 52C2">
    <location>
        <begin position="1"/>
        <end position="510"/>
    </location>
</feature>
<feature type="binding site" description="axial binding residue" evidence="1">
    <location>
        <position position="458"/>
    </location>
    <ligand>
        <name>heme</name>
        <dbReference type="ChEBI" id="CHEBI:30413"/>
    </ligand>
    <ligandPart>
        <name>Fe</name>
        <dbReference type="ChEBI" id="CHEBI:18248"/>
    </ligandPart>
</feature>
<keyword id="KW-0349">Heme</keyword>
<keyword id="KW-0408">Iron</keyword>
<keyword id="KW-0472">Membrane</keyword>
<keyword id="KW-0479">Metal-binding</keyword>
<keyword id="KW-0503">Monooxygenase</keyword>
<keyword id="KW-0560">Oxidoreductase</keyword>
<accession>Q12587</accession>
<organism>
    <name type="scientific">Candida maltosa</name>
    <name type="common">Yeast</name>
    <dbReference type="NCBI Taxonomy" id="5479"/>
    <lineage>
        <taxon>Eukaryota</taxon>
        <taxon>Fungi</taxon>
        <taxon>Dikarya</taxon>
        <taxon>Ascomycota</taxon>
        <taxon>Saccharomycotina</taxon>
        <taxon>Pichiomycetes</taxon>
        <taxon>Debaryomycetaceae</taxon>
        <taxon>Candida/Lodderomyces clade</taxon>
        <taxon>Candida</taxon>
    </lineage>
</organism>
<evidence type="ECO:0000250" key="1"/>
<evidence type="ECO:0000305" key="2"/>
<name>CP52Q_CANMA</name>
<protein>
    <recommendedName>
        <fullName>Cytochrome P450 52C2</fullName>
        <ecNumber>1.14.14.-</ecNumber>
    </recommendedName>
    <alternativeName>
        <fullName>Alkane-inducible P450-ALK6-A</fullName>
    </alternativeName>
    <alternativeName>
        <fullName>CYPLIIC2</fullName>
    </alternativeName>
</protein>